<sequence>MAQAHKESVLAAACVRTPVNPYTKAPLALYERELGERQQQRTASVSPQRLPRTSMGTPAAPAAALDWEEARCCKSRRCQDWVFDISKVHHPDKDYYVQVEKLKKAHLQNMEQLEKMYDKKLHLSGVHNPENEQGVVREVYRSAWEPKSVLPAEYDDKYLKHSLSGSVSPSLSESSHESTNGDSSDSEHSVSARNKILDMWNEFTVEDYIRNSEYFSKEIAKNKTSKKSKEWSHKITIPEPFQMTIRESKKKEMNIKSKSEIELENNLLKKKLEEEAECQKKFRANPVPSSVYLPLYQEIVERNEERRSFVKEKSKDILLATQKPFQFIEREERKKTLRLDFMNLSTSVPSANHFKAKPVPKSIYGTSTAERLKEEELYRGIRIHMRAQELLQNSSYPTITLAPGAHSGTKKGKCYKPKEKQKHKPKISATIPHSQTMHENQQKRLPESTSTKHVTVCEPFQLRTSNIPSHKEKIIMDIQADEENLKETRWPYKSPRAQARIHSSAGTLNPQGEALCNIPRSTELSKRREHAIRKREKQRTKDYMKELEAMEQRVLNKPLLIERVAQRNALMSAEKQYLNVLRDLGLSEEFVSKNGQSASVDEHVSVREENNPRAESTEGTLVLEDLLDDAEKYQTDPESEEAQEEDAYSTDEDHSMEEI</sequence>
<name>F161A_XENTR</name>
<dbReference type="EMBL" id="BC158257">
    <property type="protein sequence ID" value="AAI58258.1"/>
    <property type="molecule type" value="mRNA"/>
</dbReference>
<dbReference type="RefSeq" id="NP_001119995.1">
    <property type="nucleotide sequence ID" value="NM_001126523.1"/>
</dbReference>
<dbReference type="SMR" id="B0BM24"/>
<dbReference type="FunCoup" id="B0BM24">
    <property type="interactions" value="366"/>
</dbReference>
<dbReference type="STRING" id="8364.ENSXETP00000045061"/>
<dbReference type="PaxDb" id="8364-ENSXETP00000064127"/>
<dbReference type="GeneID" id="100144951"/>
<dbReference type="KEGG" id="xtr:100144951"/>
<dbReference type="AGR" id="Xenbase:XB-GENE-5821022"/>
<dbReference type="CTD" id="84140"/>
<dbReference type="eggNOG" id="ENOG502QRC3">
    <property type="taxonomic scope" value="Eukaryota"/>
</dbReference>
<dbReference type="InParanoid" id="B0BM24"/>
<dbReference type="OMA" id="EVTECQR"/>
<dbReference type="OrthoDB" id="2150121at2759"/>
<dbReference type="PhylomeDB" id="B0BM24"/>
<dbReference type="TreeFam" id="TF321199"/>
<dbReference type="Proteomes" id="UP000008143">
    <property type="component" value="Chromosome 5"/>
</dbReference>
<dbReference type="Bgee" id="ENSXETG00000002233">
    <property type="expression patterns" value="Expressed in 4-cell stage embryo and 6 other cell types or tissues"/>
</dbReference>
<dbReference type="GO" id="GO:0005814">
    <property type="term" value="C:centriole"/>
    <property type="evidence" value="ECO:0000250"/>
    <property type="project" value="UniProtKB"/>
</dbReference>
<dbReference type="GO" id="GO:0005929">
    <property type="term" value="C:cilium"/>
    <property type="evidence" value="ECO:0007669"/>
    <property type="project" value="UniProtKB-SubCell"/>
</dbReference>
<dbReference type="GO" id="GO:0005737">
    <property type="term" value="C:cytoplasm"/>
    <property type="evidence" value="ECO:0007669"/>
    <property type="project" value="UniProtKB-KW"/>
</dbReference>
<dbReference type="GO" id="GO:0030030">
    <property type="term" value="P:cell projection organization"/>
    <property type="evidence" value="ECO:0007669"/>
    <property type="project" value="UniProtKB-KW"/>
</dbReference>
<dbReference type="InterPro" id="IPR051655">
    <property type="entry name" value="FAM161"/>
</dbReference>
<dbReference type="InterPro" id="IPR019579">
    <property type="entry name" value="FAM161A/B"/>
</dbReference>
<dbReference type="PANTHER" id="PTHR21501">
    <property type="entry name" value="PROTEIN FAM-161"/>
    <property type="match status" value="1"/>
</dbReference>
<dbReference type="PANTHER" id="PTHR21501:SF3">
    <property type="entry name" value="PROTEIN FAM161A"/>
    <property type="match status" value="1"/>
</dbReference>
<dbReference type="Pfam" id="PF10595">
    <property type="entry name" value="FAM161A_B"/>
    <property type="match status" value="1"/>
</dbReference>
<feature type="chain" id="PRO_0000329056" description="Protein FAM161A">
    <location>
        <begin position="1"/>
        <end position="659"/>
    </location>
</feature>
<feature type="region of interest" description="Disordered" evidence="3">
    <location>
        <begin position="34"/>
        <end position="59"/>
    </location>
</feature>
<feature type="region of interest" description="Disordered" evidence="3">
    <location>
        <begin position="165"/>
        <end position="190"/>
    </location>
</feature>
<feature type="region of interest" description="Disordered" evidence="3">
    <location>
        <begin position="401"/>
        <end position="428"/>
    </location>
</feature>
<feature type="region of interest" description="Disordered" evidence="3">
    <location>
        <begin position="594"/>
        <end position="659"/>
    </location>
</feature>
<feature type="coiled-coil region" evidence="2">
    <location>
        <begin position="96"/>
        <end position="120"/>
    </location>
</feature>
<feature type="coiled-coil region" evidence="2">
    <location>
        <begin position="531"/>
        <end position="557"/>
    </location>
</feature>
<feature type="compositionally biased region" description="Basic residues" evidence="3">
    <location>
        <begin position="408"/>
        <end position="426"/>
    </location>
</feature>
<feature type="compositionally biased region" description="Basic and acidic residues" evidence="3">
    <location>
        <begin position="600"/>
        <end position="616"/>
    </location>
</feature>
<feature type="compositionally biased region" description="Acidic residues" evidence="3">
    <location>
        <begin position="637"/>
        <end position="650"/>
    </location>
</feature>
<protein>
    <recommendedName>
        <fullName>Protein FAM161A</fullName>
    </recommendedName>
</protein>
<gene>
    <name type="primary">fam161a</name>
</gene>
<proteinExistence type="evidence at transcript level"/>
<evidence type="ECO:0000250" key="1">
    <source>
        <dbReference type="UniProtKB" id="Q3B820"/>
    </source>
</evidence>
<evidence type="ECO:0000255" key="2"/>
<evidence type="ECO:0000256" key="3">
    <source>
        <dbReference type="SAM" id="MobiDB-lite"/>
    </source>
</evidence>
<evidence type="ECO:0000305" key="4"/>
<comment type="function">
    <text evidence="1">Involved in ciliogenesis.</text>
</comment>
<comment type="subcellular location">
    <subcellularLocation>
        <location evidence="1">Cytoplasm</location>
        <location evidence="1">Cytoskeleton</location>
        <location evidence="1">Cilium basal body</location>
    </subcellularLocation>
    <subcellularLocation>
        <location evidence="1">Cell projection</location>
        <location evidence="1">Cilium</location>
    </subcellularLocation>
    <subcellularLocation>
        <location evidence="1">Cytoplasm</location>
        <location evidence="1">Cytoskeleton</location>
        <location evidence="1">Microtubule organizing center</location>
        <location evidence="1">Centrosome</location>
        <location evidence="1">Centriole</location>
    </subcellularLocation>
    <text evidence="1">Localized in the region between the outer and inner photoreceptor segments, corresponding to the photoreceptor connecting cilium. Localizes to the inner scaffold in the central region of centrioles.</text>
</comment>
<comment type="similarity">
    <text evidence="4">Belongs to the FAM161 family.</text>
</comment>
<keyword id="KW-0966">Cell projection</keyword>
<keyword id="KW-0969">Cilium</keyword>
<keyword id="KW-0970">Cilium biogenesis/degradation</keyword>
<keyword id="KW-0175">Coiled coil</keyword>
<keyword id="KW-0963">Cytoplasm</keyword>
<keyword id="KW-0206">Cytoskeleton</keyword>
<keyword id="KW-1185">Reference proteome</keyword>
<reference key="1">
    <citation type="submission" date="2008-01" db="EMBL/GenBank/DDBJ databases">
        <authorList>
            <consortium name="NIH - Xenopus Gene Collection (XGC) project"/>
        </authorList>
    </citation>
    <scope>NUCLEOTIDE SEQUENCE [LARGE SCALE MRNA]</scope>
    <source>
        <tissue>Testis</tissue>
    </source>
</reference>
<organism>
    <name type="scientific">Xenopus tropicalis</name>
    <name type="common">Western clawed frog</name>
    <name type="synonym">Silurana tropicalis</name>
    <dbReference type="NCBI Taxonomy" id="8364"/>
    <lineage>
        <taxon>Eukaryota</taxon>
        <taxon>Metazoa</taxon>
        <taxon>Chordata</taxon>
        <taxon>Craniata</taxon>
        <taxon>Vertebrata</taxon>
        <taxon>Euteleostomi</taxon>
        <taxon>Amphibia</taxon>
        <taxon>Batrachia</taxon>
        <taxon>Anura</taxon>
        <taxon>Pipoidea</taxon>
        <taxon>Pipidae</taxon>
        <taxon>Xenopodinae</taxon>
        <taxon>Xenopus</taxon>
        <taxon>Silurana</taxon>
    </lineage>
</organism>
<accession>B0BM24</accession>